<reference key="1">
    <citation type="journal article" date="2006" name="J. Bacteriol.">
        <title>Living with genome instability: the adaptation of phytoplasmas to diverse environments of their insect and plant hosts.</title>
        <authorList>
            <person name="Bai X."/>
            <person name="Zhang J."/>
            <person name="Ewing A."/>
            <person name="Miller S.A."/>
            <person name="Jancso Radek A."/>
            <person name="Shevchenko D.V."/>
            <person name="Tsukerman K."/>
            <person name="Walunas T."/>
            <person name="Lapidus A."/>
            <person name="Campbell J.W."/>
            <person name="Hogenhout S.A."/>
        </authorList>
    </citation>
    <scope>NUCLEOTIDE SEQUENCE [LARGE SCALE GENOMIC DNA]</scope>
    <source>
        <strain>AYWB</strain>
    </source>
</reference>
<organism>
    <name type="scientific">Aster yellows witches'-broom phytoplasma (strain AYWB)</name>
    <dbReference type="NCBI Taxonomy" id="322098"/>
    <lineage>
        <taxon>Bacteria</taxon>
        <taxon>Bacillati</taxon>
        <taxon>Mycoplasmatota</taxon>
        <taxon>Mollicutes</taxon>
        <taxon>Acholeplasmatales</taxon>
        <taxon>Acholeplasmataceae</taxon>
        <taxon>Candidatus Phytoplasma</taxon>
        <taxon>16SrI (Aster yellows group)</taxon>
    </lineage>
</organism>
<feature type="chain" id="PRO_0000323067" description="Small ribosomal subunit protein uS5">
    <location>
        <begin position="1"/>
        <end position="185"/>
    </location>
</feature>
<feature type="domain" description="S5 DRBM" evidence="1">
    <location>
        <begin position="29"/>
        <end position="92"/>
    </location>
</feature>
<proteinExistence type="inferred from homology"/>
<protein>
    <recommendedName>
        <fullName evidence="1">Small ribosomal subunit protein uS5</fullName>
    </recommendedName>
    <alternativeName>
        <fullName evidence="2">30S ribosomal protein S5</fullName>
    </alternativeName>
</protein>
<keyword id="KW-0687">Ribonucleoprotein</keyword>
<keyword id="KW-0689">Ribosomal protein</keyword>
<keyword id="KW-0694">RNA-binding</keyword>
<keyword id="KW-0699">rRNA-binding</keyword>
<comment type="function">
    <text evidence="1">With S4 and S12 plays an important role in translational accuracy.</text>
</comment>
<comment type="function">
    <text evidence="1">Located at the back of the 30S subunit body where it stabilizes the conformation of the head with respect to the body.</text>
</comment>
<comment type="subunit">
    <text evidence="1">Part of the 30S ribosomal subunit. Contacts proteins S4 and S8.</text>
</comment>
<comment type="domain">
    <text>The N-terminal domain interacts with the head of the 30S subunit; the C-terminal domain interacts with the body and contacts protein S4. The interaction surface between S4 and S5 is involved in control of translational fidelity.</text>
</comment>
<comment type="similarity">
    <text evidence="1">Belongs to the universal ribosomal protein uS5 family.</text>
</comment>
<evidence type="ECO:0000255" key="1">
    <source>
        <dbReference type="HAMAP-Rule" id="MF_01307"/>
    </source>
</evidence>
<evidence type="ECO:0000305" key="2"/>
<dbReference type="EMBL" id="CP000061">
    <property type="protein sequence ID" value="ABC65622.1"/>
    <property type="molecule type" value="Genomic_DNA"/>
</dbReference>
<dbReference type="SMR" id="Q2NIX1"/>
<dbReference type="STRING" id="322098.AYWB_505"/>
<dbReference type="KEGG" id="ayw:AYWB_505"/>
<dbReference type="eggNOG" id="COG0098">
    <property type="taxonomic scope" value="Bacteria"/>
</dbReference>
<dbReference type="HOGENOM" id="CLU_065898_2_2_14"/>
<dbReference type="PhylomeDB" id="Q2NIX1"/>
<dbReference type="Proteomes" id="UP000001934">
    <property type="component" value="Chromosome"/>
</dbReference>
<dbReference type="GO" id="GO:0015935">
    <property type="term" value="C:small ribosomal subunit"/>
    <property type="evidence" value="ECO:0007669"/>
    <property type="project" value="InterPro"/>
</dbReference>
<dbReference type="GO" id="GO:0019843">
    <property type="term" value="F:rRNA binding"/>
    <property type="evidence" value="ECO:0007669"/>
    <property type="project" value="UniProtKB-UniRule"/>
</dbReference>
<dbReference type="GO" id="GO:0003735">
    <property type="term" value="F:structural constituent of ribosome"/>
    <property type="evidence" value="ECO:0007669"/>
    <property type="project" value="InterPro"/>
</dbReference>
<dbReference type="GO" id="GO:0006412">
    <property type="term" value="P:translation"/>
    <property type="evidence" value="ECO:0007669"/>
    <property type="project" value="UniProtKB-UniRule"/>
</dbReference>
<dbReference type="FunFam" id="3.30.160.20:FF:000001">
    <property type="entry name" value="30S ribosomal protein S5"/>
    <property type="match status" value="1"/>
</dbReference>
<dbReference type="FunFam" id="3.30.230.10:FF:000002">
    <property type="entry name" value="30S ribosomal protein S5"/>
    <property type="match status" value="1"/>
</dbReference>
<dbReference type="Gene3D" id="3.30.160.20">
    <property type="match status" value="1"/>
</dbReference>
<dbReference type="Gene3D" id="3.30.230.10">
    <property type="match status" value="1"/>
</dbReference>
<dbReference type="HAMAP" id="MF_01307_B">
    <property type="entry name" value="Ribosomal_uS5_B"/>
    <property type="match status" value="1"/>
</dbReference>
<dbReference type="InterPro" id="IPR020568">
    <property type="entry name" value="Ribosomal_Su5_D2-typ_SF"/>
</dbReference>
<dbReference type="InterPro" id="IPR000851">
    <property type="entry name" value="Ribosomal_uS5"/>
</dbReference>
<dbReference type="InterPro" id="IPR005712">
    <property type="entry name" value="Ribosomal_uS5_bac-type"/>
</dbReference>
<dbReference type="InterPro" id="IPR005324">
    <property type="entry name" value="Ribosomal_uS5_C"/>
</dbReference>
<dbReference type="InterPro" id="IPR013810">
    <property type="entry name" value="Ribosomal_uS5_N"/>
</dbReference>
<dbReference type="InterPro" id="IPR018192">
    <property type="entry name" value="Ribosomal_uS5_N_CS"/>
</dbReference>
<dbReference type="InterPro" id="IPR014721">
    <property type="entry name" value="Ribsml_uS5_D2-typ_fold_subgr"/>
</dbReference>
<dbReference type="NCBIfam" id="TIGR01021">
    <property type="entry name" value="rpsE_bact"/>
    <property type="match status" value="1"/>
</dbReference>
<dbReference type="PANTHER" id="PTHR48277">
    <property type="entry name" value="MITOCHONDRIAL RIBOSOMAL PROTEIN S5"/>
    <property type="match status" value="1"/>
</dbReference>
<dbReference type="PANTHER" id="PTHR48277:SF1">
    <property type="entry name" value="MITOCHONDRIAL RIBOSOMAL PROTEIN S5"/>
    <property type="match status" value="1"/>
</dbReference>
<dbReference type="Pfam" id="PF00333">
    <property type="entry name" value="Ribosomal_S5"/>
    <property type="match status" value="1"/>
</dbReference>
<dbReference type="Pfam" id="PF03719">
    <property type="entry name" value="Ribosomal_S5_C"/>
    <property type="match status" value="1"/>
</dbReference>
<dbReference type="SUPFAM" id="SSF54768">
    <property type="entry name" value="dsRNA-binding domain-like"/>
    <property type="match status" value="1"/>
</dbReference>
<dbReference type="SUPFAM" id="SSF54211">
    <property type="entry name" value="Ribosomal protein S5 domain 2-like"/>
    <property type="match status" value="1"/>
</dbReference>
<dbReference type="PROSITE" id="PS00585">
    <property type="entry name" value="RIBOSOMAL_S5"/>
    <property type="match status" value="1"/>
</dbReference>
<dbReference type="PROSITE" id="PS50881">
    <property type="entry name" value="S5_DSRBD"/>
    <property type="match status" value="1"/>
</dbReference>
<gene>
    <name evidence="1" type="primary">rpsE</name>
    <name type="ordered locus">AYWB_505</name>
</gene>
<accession>Q2NIX1</accession>
<name>RS5_AYWBP</name>
<sequence>MSQIRLTFLKEKNKMKAIKKEFNKKAALLEEKVVKINRITKVVKGGARFRFSALVVVGDKKGQIGFATAKAKEIVEAIKKALEKAKKQLVRIPIVGTTIPHDTIGRFGASKFFLKPASKGTGIVAGGKAARTILELVGINDVLTKTFGSRTSINVIRAVMDGLQSLRTKEEVAKLRGINLAKKEQ</sequence>